<keyword id="KW-1043">Host membrane</keyword>
<keyword id="KW-0472">Membrane</keyword>
<keyword id="KW-0812">Transmembrane</keyword>
<keyword id="KW-1133">Transmembrane helix</keyword>
<keyword id="KW-0946">Virion</keyword>
<organism>
    <name type="scientific">Enterobacteria phage fd</name>
    <name type="common">Bacteriophage fd</name>
    <dbReference type="NCBI Taxonomy" id="2847073"/>
    <lineage>
        <taxon>Viruses</taxon>
        <taxon>Monodnaviria</taxon>
        <taxon>Loebvirae</taxon>
        <taxon>Hofneiviricota</taxon>
        <taxon>Faserviricetes</taxon>
        <taxon>Tubulavirales</taxon>
        <taxon>Inoviridae</taxon>
        <taxon>Inovirus</taxon>
        <taxon>Enterobacteria phage M13</taxon>
    </lineage>
</organism>
<dbReference type="EMBL" id="J02451">
    <property type="protein sequence ID" value="AAA32306.1"/>
    <property type="molecule type" value="Genomic_DNA"/>
</dbReference>
<dbReference type="PIR" id="A04277">
    <property type="entry name" value="Z7BPFD"/>
</dbReference>
<dbReference type="SMR" id="P69533"/>
<dbReference type="KEGG" id="vg:22475001"/>
<dbReference type="Proteomes" id="UP000001836">
    <property type="component" value="Genome"/>
</dbReference>
<dbReference type="GO" id="GO:0033644">
    <property type="term" value="C:host cell membrane"/>
    <property type="evidence" value="ECO:0007669"/>
    <property type="project" value="UniProtKB-SubCell"/>
</dbReference>
<dbReference type="GO" id="GO:0016020">
    <property type="term" value="C:membrane"/>
    <property type="evidence" value="ECO:0007669"/>
    <property type="project" value="UniProtKB-KW"/>
</dbReference>
<dbReference type="GO" id="GO:0044423">
    <property type="term" value="C:virion component"/>
    <property type="evidence" value="ECO:0007669"/>
    <property type="project" value="UniProtKB-KW"/>
</dbReference>
<dbReference type="InterPro" id="IPR045539">
    <property type="entry name" value="Inovirus_G7P_2"/>
</dbReference>
<dbReference type="Pfam" id="PF19978">
    <property type="entry name" value="Inovirus_G7P_2"/>
    <property type="match status" value="1"/>
</dbReference>
<name>G7P_BPFD</name>
<gene>
    <name type="primary">VII</name>
</gene>
<proteinExistence type="inferred from homology"/>
<protein>
    <recommendedName>
        <fullName>Tail virion protein G7P</fullName>
    </recommendedName>
    <alternativeName>
        <fullName>Coat protein C, polypeptide I</fullName>
    </alternativeName>
    <alternativeName>
        <fullName>Gene 7 protein</fullName>
        <shortName>G7P</shortName>
    </alternativeName>
</protein>
<evidence type="ECO:0000250" key="1"/>
<evidence type="ECO:0000255" key="2"/>
<evidence type="ECO:0000305" key="3"/>
<feature type="chain" id="PRO_0000098175" description="Tail virion protein G7P">
    <location>
        <begin position="1"/>
        <end position="33"/>
    </location>
</feature>
<feature type="transmembrane region" description="Helical" evidence="2">
    <location>
        <begin position="10"/>
        <end position="30"/>
    </location>
</feature>
<reference key="1">
    <citation type="journal article" date="1978" name="Nucleic Acids Res.">
        <title>Nucleotide sequence of bacteriophage fd DNA.</title>
        <authorList>
            <person name="Beck E."/>
            <person name="Sommer R."/>
            <person name="Auerswald E.A."/>
            <person name="Kurz C."/>
            <person name="Zink B."/>
            <person name="Osterburg G."/>
            <person name="Schaller H."/>
            <person name="Sugimoto K."/>
            <person name="Sugisaki H."/>
            <person name="Okamoto T."/>
            <person name="Takanami M."/>
        </authorList>
    </citation>
    <scope>NUCLEOTIDE SEQUENCE [GENOMIC DNA]</scope>
    <source>
        <strain>478 / Heidelberg</strain>
    </source>
</reference>
<organismHost>
    <name type="scientific">Escherichia coli</name>
    <dbReference type="NCBI Taxonomy" id="562"/>
</organismHost>
<sequence length="33" mass="3602">MEQVADFDTIYQAMIQISVVLCFALGIIAGGQR</sequence>
<accession>P69533</accession>
<accession>P03675</accession>
<comment type="function">
    <text evidence="1">May initiate with G9P the virion concomitant assembly-budding process, by interacting with the packaging signal of the viral genome. The assembly-budding takes place at the host inner membrane. In turn, G7P and G9P are present at the end of the filamentous virion that emerges first from the bacterial host (By similarity).</text>
</comment>
<comment type="subcellular location">
    <subcellularLocation>
        <location evidence="3">Virion</location>
    </subcellularLocation>
    <subcellularLocation>
        <location evidence="3">Host membrane</location>
        <topology evidence="3">Single-pass membrane protein</topology>
    </subcellularLocation>
    <text evidence="1">Prior to assembly, is found associated with the bacterial host inner membrane. There are about five copies of this protein per mature phage that are located on the tail side of the filamentous virion with G9P (By similarity).</text>
</comment>
<comment type="similarity">
    <text evidence="3">Belongs to the inovirus G7P protein family.</text>
</comment>